<comment type="function">
    <text>May be involved in cell wall organization and biogenesis.</text>
</comment>
<comment type="sequence caution" evidence="1">
    <conflict type="frameshift">
        <sequence resource="EMBL-CDS" id="CAA53933"/>
    </conflict>
</comment>
<comment type="sequence caution" evidence="1">
    <conflict type="frameshift">
        <sequence resource="EMBL-CDS" id="CAA85020"/>
    </conflict>
</comment>
<protein>
    <recommendedName>
        <fullName>Protein ECM8</fullName>
    </recommendedName>
    <alternativeName>
        <fullName>Extracellular mutant protein 8</fullName>
    </alternativeName>
</protein>
<organism>
    <name type="scientific">Saccharomyces cerevisiae (strain ATCC 204508 / S288c)</name>
    <name type="common">Baker's yeast</name>
    <dbReference type="NCBI Taxonomy" id="559292"/>
    <lineage>
        <taxon>Eukaryota</taxon>
        <taxon>Fungi</taxon>
        <taxon>Dikarya</taxon>
        <taxon>Ascomycota</taxon>
        <taxon>Saccharomycotina</taxon>
        <taxon>Saccharomycetes</taxon>
        <taxon>Saccharomycetales</taxon>
        <taxon>Saccharomycetaceae</taxon>
        <taxon>Saccharomyces</taxon>
    </lineage>
</organism>
<gene>
    <name type="primary">ECM8</name>
    <name type="ordered locus">YBR076W</name>
    <name type="ORF">YBR0722</name>
</gene>
<name>ECM8_YEAST</name>
<proteinExistence type="predicted"/>
<feature type="chain" id="PRO_0000086924" description="Protein ECM8">
    <location>
        <begin position="1"/>
        <end position="354"/>
    </location>
</feature>
<dbReference type="EMBL" id="X76294">
    <property type="protein sequence ID" value="CAA53933.1"/>
    <property type="status" value="ALT_FRAME"/>
    <property type="molecule type" value="Genomic_DNA"/>
</dbReference>
<dbReference type="EMBL" id="Z35945">
    <property type="protein sequence ID" value="CAA85020.1"/>
    <property type="status" value="ALT_FRAME"/>
    <property type="molecule type" value="Genomic_DNA"/>
</dbReference>
<dbReference type="EMBL" id="BK006936">
    <property type="protein sequence ID" value="DAA07195.2"/>
    <property type="molecule type" value="Genomic_DNA"/>
</dbReference>
<dbReference type="PIR" id="S45471">
    <property type="entry name" value="S45471"/>
</dbReference>
<dbReference type="RefSeq" id="NP_009632.2">
    <property type="nucleotide sequence ID" value="NM_001178424.2"/>
</dbReference>
<dbReference type="BioGRID" id="32778">
    <property type="interactions" value="198"/>
</dbReference>
<dbReference type="DIP" id="DIP-5145N"/>
<dbReference type="FunCoup" id="P38246">
    <property type="interactions" value="41"/>
</dbReference>
<dbReference type="STRING" id="4932.YBR076W"/>
<dbReference type="PaxDb" id="4932-YBR076W"/>
<dbReference type="PeptideAtlas" id="P38246"/>
<dbReference type="EnsemblFungi" id="YBR076W_mRNA">
    <property type="protein sequence ID" value="YBR076W"/>
    <property type="gene ID" value="YBR076W"/>
</dbReference>
<dbReference type="GeneID" id="852368"/>
<dbReference type="KEGG" id="sce:YBR076W"/>
<dbReference type="AGR" id="SGD:S000000280"/>
<dbReference type="SGD" id="S000000280">
    <property type="gene designation" value="ECM8"/>
</dbReference>
<dbReference type="VEuPathDB" id="FungiDB:YBR076W"/>
<dbReference type="eggNOG" id="ENOG502RXYS">
    <property type="taxonomic scope" value="Eukaryota"/>
</dbReference>
<dbReference type="HOGENOM" id="CLU_055691_0_0_1"/>
<dbReference type="InParanoid" id="P38246"/>
<dbReference type="OMA" id="HCENWIR"/>
<dbReference type="OrthoDB" id="3981139at2759"/>
<dbReference type="BioCyc" id="YEAST:G3O-29044-MONOMER"/>
<dbReference type="BioGRID-ORCS" id="852368">
    <property type="hits" value="0 hits in 10 CRISPR screens"/>
</dbReference>
<dbReference type="PRO" id="PR:P38246"/>
<dbReference type="Proteomes" id="UP000002311">
    <property type="component" value="Chromosome II"/>
</dbReference>
<dbReference type="RNAct" id="P38246">
    <property type="molecule type" value="protein"/>
</dbReference>
<dbReference type="GO" id="GO:0071555">
    <property type="term" value="P:cell wall organization"/>
    <property type="evidence" value="ECO:0007669"/>
    <property type="project" value="UniProtKB-KW"/>
</dbReference>
<dbReference type="InterPro" id="IPR028012">
    <property type="entry name" value="Rua1_C"/>
</dbReference>
<dbReference type="Pfam" id="PF14616">
    <property type="entry name" value="Rua1_C"/>
    <property type="match status" value="1"/>
</dbReference>
<evidence type="ECO:0000305" key="1"/>
<sequence length="354" mass="41770">MDYGYFFPAQRIEETNGVDFWIDSNAEFTQSKRPDSSTSTLSRVLTDTTNVSNNSGSLKRKTIKNKIFPQRKIFNDSENFDFGKANTDCKHVFKSISKQLIFLPRCFQHHSIRGWMKDRYSEFGYKIKRNQNCPPSACVQALYNTSRSNTEESNPNSLDSLIMYKYMRYSEKKKELMCRFCQGNNWILAENYLKHLFFAHGILSEFKPHTLYHFESKLLKIQGKLNFKIQVLKEPEFSKKILNSLTVSIIPSPLAYYTQTLNGGFRRIHVKCPHCENWIRLGWCEYDEIIRDSFQDFESLRNLNADYNGMSYIQTRNREDIEGIYENYFTHYIQCDLATFRTKCLYVQVITKSN</sequence>
<reference key="1">
    <citation type="journal article" date="1994" name="Yeast">
        <title>Sequence analysis of a 31 kb DNA fragment from the right arm of Saccharomyces cerevisiae chromosome II.</title>
        <authorList>
            <person name="van der Aart Q.J.M."/>
            <person name="Barthe C."/>
            <person name="Doignon F."/>
            <person name="Aigle M."/>
            <person name="Crouzet M."/>
            <person name="Steensma H.Y."/>
        </authorList>
    </citation>
    <scope>NUCLEOTIDE SEQUENCE [GENOMIC DNA]</scope>
    <source>
        <strain>ATCC 204508 / S288c</strain>
    </source>
</reference>
<reference key="2">
    <citation type="journal article" date="1994" name="EMBO J.">
        <title>Complete DNA sequence of yeast chromosome II.</title>
        <authorList>
            <person name="Feldmann H."/>
            <person name="Aigle M."/>
            <person name="Aljinovic G."/>
            <person name="Andre B."/>
            <person name="Baclet M.C."/>
            <person name="Barthe C."/>
            <person name="Baur A."/>
            <person name="Becam A.-M."/>
            <person name="Biteau N."/>
            <person name="Boles E."/>
            <person name="Brandt T."/>
            <person name="Brendel M."/>
            <person name="Brueckner M."/>
            <person name="Bussereau F."/>
            <person name="Christiansen C."/>
            <person name="Contreras R."/>
            <person name="Crouzet M."/>
            <person name="Cziepluch C."/>
            <person name="Demolis N."/>
            <person name="Delaveau T."/>
            <person name="Doignon F."/>
            <person name="Domdey H."/>
            <person name="Duesterhus S."/>
            <person name="Dubois E."/>
            <person name="Dujon B."/>
            <person name="El Bakkoury M."/>
            <person name="Entian K.-D."/>
            <person name="Feuermann M."/>
            <person name="Fiers W."/>
            <person name="Fobo G.M."/>
            <person name="Fritz C."/>
            <person name="Gassenhuber J."/>
            <person name="Glansdorff N."/>
            <person name="Goffeau A."/>
            <person name="Grivell L.A."/>
            <person name="de Haan M."/>
            <person name="Hein C."/>
            <person name="Herbert C.J."/>
            <person name="Hollenberg C.P."/>
            <person name="Holmstroem K."/>
            <person name="Jacq C."/>
            <person name="Jacquet M."/>
            <person name="Jauniaux J.-C."/>
            <person name="Jonniaux J.-L."/>
            <person name="Kallesoee T."/>
            <person name="Kiesau P."/>
            <person name="Kirchrath L."/>
            <person name="Koetter P."/>
            <person name="Korol S."/>
            <person name="Liebl S."/>
            <person name="Logghe M."/>
            <person name="Lohan A.J.E."/>
            <person name="Louis E.J."/>
            <person name="Li Z.Y."/>
            <person name="Maat M.J."/>
            <person name="Mallet L."/>
            <person name="Mannhaupt G."/>
            <person name="Messenguy F."/>
            <person name="Miosga T."/>
            <person name="Molemans F."/>
            <person name="Mueller S."/>
            <person name="Nasr F."/>
            <person name="Obermaier B."/>
            <person name="Perea J."/>
            <person name="Pierard A."/>
            <person name="Piravandi E."/>
            <person name="Pohl F.M."/>
            <person name="Pohl T.M."/>
            <person name="Potier S."/>
            <person name="Proft M."/>
            <person name="Purnelle B."/>
            <person name="Ramezani Rad M."/>
            <person name="Rieger M."/>
            <person name="Rose M."/>
            <person name="Schaaff-Gerstenschlaeger I."/>
            <person name="Scherens B."/>
            <person name="Schwarzlose C."/>
            <person name="Skala J."/>
            <person name="Slonimski P.P."/>
            <person name="Smits P.H.M."/>
            <person name="Souciet J.-L."/>
            <person name="Steensma H.Y."/>
            <person name="Stucka R."/>
            <person name="Urrestarazu L.A."/>
            <person name="van der Aart Q.J.M."/>
            <person name="Van Dyck L."/>
            <person name="Vassarotti A."/>
            <person name="Vetter I."/>
            <person name="Vierendeels F."/>
            <person name="Vissers S."/>
            <person name="Wagner G."/>
            <person name="de Wergifosse P."/>
            <person name="Wolfe K.H."/>
            <person name="Zagulski M."/>
            <person name="Zimmermann F.K."/>
            <person name="Mewes H.-W."/>
            <person name="Kleine K."/>
        </authorList>
    </citation>
    <scope>NUCLEOTIDE SEQUENCE [LARGE SCALE GENOMIC DNA]</scope>
    <source>
        <strain>ATCC 204508 / S288c</strain>
    </source>
</reference>
<reference key="3">
    <citation type="journal article" date="2014" name="G3 (Bethesda)">
        <title>The reference genome sequence of Saccharomyces cerevisiae: Then and now.</title>
        <authorList>
            <person name="Engel S.R."/>
            <person name="Dietrich F.S."/>
            <person name="Fisk D.G."/>
            <person name="Binkley G."/>
            <person name="Balakrishnan R."/>
            <person name="Costanzo M.C."/>
            <person name="Dwight S.S."/>
            <person name="Hitz B.C."/>
            <person name="Karra K."/>
            <person name="Nash R.S."/>
            <person name="Weng S."/>
            <person name="Wong E.D."/>
            <person name="Lloyd P."/>
            <person name="Skrzypek M.S."/>
            <person name="Miyasato S.R."/>
            <person name="Simison M."/>
            <person name="Cherry J.M."/>
        </authorList>
    </citation>
    <scope>GENOME REANNOTATION</scope>
    <scope>SEQUENCE REVISION TO 74 AND 353</scope>
    <source>
        <strain>ATCC 204508 / S288c</strain>
    </source>
</reference>
<reference key="4">
    <citation type="journal article" date="1997" name="Genetics">
        <title>Large scale identification of genes involved in cell surface biosynthesis and architecture in Saccharomyces cerevisiae.</title>
        <authorList>
            <person name="Lussier M."/>
            <person name="White A.-M."/>
            <person name="Sheraton J."/>
            <person name="di Paolo T."/>
            <person name="Treadwell J."/>
            <person name="Southard S.B."/>
            <person name="Horenstein C.I."/>
            <person name="Chen-Weiner J."/>
            <person name="Ram A.F.J."/>
            <person name="Kapteyn J.C."/>
            <person name="Roemer T.W."/>
            <person name="Vo D.H."/>
            <person name="Bondoc D.C."/>
            <person name="Hall J."/>
            <person name="Zhong W.-W."/>
            <person name="Sdicu A.-M."/>
            <person name="Davies J."/>
            <person name="Klis F.M."/>
            <person name="Robbins P.W."/>
            <person name="Bussey H."/>
        </authorList>
    </citation>
    <scope>IDENTIFICATION</scope>
</reference>
<keyword id="KW-0961">Cell wall biogenesis/degradation</keyword>
<keyword id="KW-1185">Reference proteome</keyword>
<accession>P38246</accession>
<accession>D6VQ75</accession>